<keyword id="KW-0233">DNA recombination</keyword>
<keyword id="KW-1185">Reference proteome</keyword>
<keyword id="KW-0814">Transposable element</keyword>
<keyword id="KW-0815">Transposition</keyword>
<accession>P0CF08</accession>
<accession>P03827</accession>
<accession>P0ADH0</accession>
<accession>P0C651</accession>
<accession>Q2EER2</accession>
<accession>Q2MCF5</accession>
<accession>Q2MCH2</accession>
<accession>Q933I5</accession>
<name>INSA2_ECOLI</name>
<comment type="function">
    <text>Absolutely required for transposition of IS1.</text>
</comment>
<comment type="similarity">
    <text evidence="1">Belongs to the IS1 elements InsA family.</text>
</comment>
<protein>
    <recommendedName>
        <fullName>Insertion element IS1 2 protein InsA</fullName>
    </recommendedName>
    <alternativeName>
        <fullName>IS1b</fullName>
    </alternativeName>
</protein>
<dbReference type="EMBL" id="L20943">
    <property type="protein sequence ID" value="AAA69642.1"/>
    <property type="molecule type" value="Unassigned_DNA"/>
</dbReference>
<dbReference type="EMBL" id="X17345">
    <property type="protein sequence ID" value="CAA35227.1"/>
    <property type="molecule type" value="Genomic_DNA"/>
</dbReference>
<dbReference type="EMBL" id="U70214">
    <property type="protein sequence ID" value="AAB08685.1"/>
    <property type="molecule type" value="Genomic_DNA"/>
</dbReference>
<dbReference type="EMBL" id="U00096">
    <property type="protein sequence ID" value="AAC73368.1"/>
    <property type="molecule type" value="Genomic_DNA"/>
</dbReference>
<dbReference type="EMBL" id="AP009048">
    <property type="protein sequence ID" value="BAE76051.1"/>
    <property type="molecule type" value="Genomic_DNA"/>
</dbReference>
<dbReference type="PIR" id="B93826">
    <property type="entry name" value="IEECB9"/>
</dbReference>
<dbReference type="PIR" id="JN0134">
    <property type="entry name" value="JN0134"/>
</dbReference>
<dbReference type="RefSeq" id="NP_414799.1">
    <property type="nucleotide sequence ID" value="NC_000913.3"/>
</dbReference>
<dbReference type="RefSeq" id="NP_862965.1">
    <property type="nucleotide sequence ID" value="NC_004998.1"/>
</dbReference>
<dbReference type="RefSeq" id="NP_863031.1">
    <property type="nucleotide sequence ID" value="NC_004998.1"/>
</dbReference>
<dbReference type="RefSeq" id="NP_957637.1">
    <property type="nucleotide sequence ID" value="NC_005327.1"/>
</dbReference>
<dbReference type="RefSeq" id="YP_001096420.1">
    <property type="nucleotide sequence ID" value="NC_009133.1"/>
</dbReference>
<dbReference type="RefSeq" id="YP_001096518.1">
    <property type="nucleotide sequence ID" value="NC_009133.1"/>
</dbReference>
<dbReference type="RefSeq" id="YP_001816581.1">
    <property type="nucleotide sequence ID" value="NC_010558.1"/>
</dbReference>
<dbReference type="RefSeq" id="YP_001816635.1">
    <property type="nucleotide sequence ID" value="NC_010558.1"/>
</dbReference>
<dbReference type="RefSeq" id="YP_002527566.1">
    <property type="nucleotide sequence ID" value="NC_011964.1"/>
</dbReference>
<dbReference type="RefSeq" id="YP_003108318.1">
    <property type="nucleotide sequence ID" value="NC_013122.1"/>
</dbReference>
<dbReference type="RefSeq" id="YP_006953891.1">
    <property type="nucleotide sequence ID" value="NC_019090.1"/>
</dbReference>
<dbReference type="RefSeq" id="YP_006954228.1">
    <property type="nucleotide sequence ID" value="NC_019095.1"/>
</dbReference>
<dbReference type="RefSeq" id="YP_006990704.1">
    <property type="nucleotide sequence ID" value="NC_019424.1"/>
</dbReference>
<dbReference type="RefSeq" id="YP_007447506.1">
    <property type="nucleotide sequence ID" value="NC_020278.2"/>
</dbReference>
<dbReference type="RefSeq" id="YP_009071497.1">
    <property type="nucleotide sequence ID" value="NC_025183.1"/>
</dbReference>
<dbReference type="FunCoup" id="P0CF08">
    <property type="interactions" value="13"/>
</dbReference>
<dbReference type="STRING" id="511145.b0265"/>
<dbReference type="PaxDb" id="511145-b0265"/>
<dbReference type="EnsemblBacteria" id="AAC73368">
    <property type="protein sequence ID" value="AAC73368"/>
    <property type="gene ID" value="b0265"/>
</dbReference>
<dbReference type="GeneID" id="944946"/>
<dbReference type="KEGG" id="ecj:JW0257"/>
<dbReference type="KEGG" id="eco:b0265"/>
<dbReference type="KEGG" id="eco:b0275"/>
<dbReference type="KEGG" id="eco:b4516"/>
<dbReference type="KEGG" id="ecoc:C3026_01280"/>
<dbReference type="EchoBASE" id="EB4706"/>
<dbReference type="eggNOG" id="COG3677">
    <property type="taxonomic scope" value="Bacteria"/>
</dbReference>
<dbReference type="HOGENOM" id="CLU_076276_6_3_6"/>
<dbReference type="InParanoid" id="P0CF08"/>
<dbReference type="OMA" id="KACEPCT"/>
<dbReference type="PhylomeDB" id="P0CF08"/>
<dbReference type="BioCyc" id="EcoCyc:G6139-MONOMER"/>
<dbReference type="PRO" id="PR:P0CF08"/>
<dbReference type="Proteomes" id="UP000000625">
    <property type="component" value="Chromosome"/>
</dbReference>
<dbReference type="GO" id="GO:0006313">
    <property type="term" value="P:DNA transposition"/>
    <property type="evidence" value="ECO:0000315"/>
    <property type="project" value="EcoCyc"/>
</dbReference>
<dbReference type="InterPro" id="IPR024431">
    <property type="entry name" value="InsA_HTH_dom"/>
</dbReference>
<dbReference type="InterPro" id="IPR003220">
    <property type="entry name" value="InsA_N_dom_Znf"/>
</dbReference>
<dbReference type="InterPro" id="IPR051252">
    <property type="entry name" value="IS1_transposase_InsA"/>
</dbReference>
<dbReference type="PANTHER" id="PTHR47923">
    <property type="entry name" value="INSERTION ELEMENT IS1 1 PROTEIN INSA-RELATED"/>
    <property type="match status" value="1"/>
</dbReference>
<dbReference type="PANTHER" id="PTHR47923:SF1">
    <property type="entry name" value="INSERTION ELEMENT IS1 1 PROTEIN INSA-RELATED"/>
    <property type="match status" value="1"/>
</dbReference>
<dbReference type="Pfam" id="PF12759">
    <property type="entry name" value="HTH_Tnp_IS1"/>
    <property type="match status" value="1"/>
</dbReference>
<dbReference type="Pfam" id="PF03811">
    <property type="entry name" value="Zn_ribbon_InsA"/>
    <property type="match status" value="1"/>
</dbReference>
<organism>
    <name type="scientific">Escherichia coli (strain K12)</name>
    <dbReference type="NCBI Taxonomy" id="83333"/>
    <lineage>
        <taxon>Bacteria</taxon>
        <taxon>Pseudomonadati</taxon>
        <taxon>Pseudomonadota</taxon>
        <taxon>Gammaproteobacteria</taxon>
        <taxon>Enterobacterales</taxon>
        <taxon>Enterobacteriaceae</taxon>
        <taxon>Escherichia</taxon>
    </lineage>
</organism>
<evidence type="ECO:0000305" key="1"/>
<reference key="1">
    <citation type="journal article" date="1990" name="Mol. Gen. Genet.">
        <title>Mapping of insertion element IS30 in the Escherichia coli K12 chromosome.</title>
        <authorList>
            <person name="Umeda M."/>
            <person name="Ohtsubo E."/>
        </authorList>
    </citation>
    <scope>NUCLEOTIDE SEQUENCE [GENOMIC DNA]</scope>
    <source>
        <strain>K12</strain>
    </source>
</reference>
<reference key="2">
    <citation type="journal article" date="1994" name="J. Bacteriol.">
        <title>The delta (argF-lacZ)205(U169) deletion greatly enhances resistance to hydrogen peroxide in stationary-phase Escherichia coli.</title>
        <authorList>
            <person name="Volkert M.R."/>
            <person name="Loewen P.C."/>
            <person name="Switala J."/>
            <person name="Crowley D."/>
            <person name="Conley M."/>
        </authorList>
    </citation>
    <scope>NUCLEOTIDE SEQUENCE [GENOMIC DNA]</scope>
</reference>
<reference key="3">
    <citation type="submission" date="1996-02" db="EMBL/GenBank/DDBJ databases">
        <title>Systematic sequencing of the Escherichia coli genome: analysis of the 4.0 - 6.0 min (189,987 - 281,416bp) region.</title>
        <authorList>
            <person name="Takemoto K."/>
            <person name="Mori H."/>
            <person name="Murayama N."/>
            <person name="Kataoka K."/>
            <person name="Yano M."/>
            <person name="Itoh T."/>
            <person name="Yamamoto Y."/>
            <person name="Inokuchi H."/>
            <person name="Miki T."/>
            <person name="Hatada E."/>
            <person name="Fukuda R."/>
            <person name="Ichihara S."/>
            <person name="Mizuno T."/>
            <person name="Makino K."/>
            <person name="Nakata A."/>
            <person name="Yura T."/>
            <person name="Sampei G."/>
            <person name="Mizobuchi K."/>
        </authorList>
    </citation>
    <scope>NUCLEOTIDE SEQUENCE [LARGE SCALE GENOMIC DNA]</scope>
    <source>
        <strain>K12 / W3110 / ATCC 27325 / DSM 5911</strain>
    </source>
</reference>
<reference key="4">
    <citation type="submission" date="1997-01" db="EMBL/GenBank/DDBJ databases">
        <title>Sequence of minutes 4-25 of Escherichia coli.</title>
        <authorList>
            <person name="Chung E."/>
            <person name="Allen E."/>
            <person name="Araujo R."/>
            <person name="Aparicio A.M."/>
            <person name="Davis K."/>
            <person name="Duncan M."/>
            <person name="Federspiel N."/>
            <person name="Hyman R."/>
            <person name="Kalman S."/>
            <person name="Komp C."/>
            <person name="Kurdi O."/>
            <person name="Lew H."/>
            <person name="Lin D."/>
            <person name="Namath A."/>
            <person name="Oefner P."/>
            <person name="Roberts D."/>
            <person name="Schramm S."/>
            <person name="Davis R.W."/>
        </authorList>
    </citation>
    <scope>NUCLEOTIDE SEQUENCE [LARGE SCALE GENOMIC DNA]</scope>
    <source>
        <strain>K12 / MG1655 / ATCC 47076</strain>
    </source>
</reference>
<reference key="5">
    <citation type="journal article" date="1997" name="Science">
        <title>The complete genome sequence of Escherichia coli K-12.</title>
        <authorList>
            <person name="Blattner F.R."/>
            <person name="Plunkett G. III"/>
            <person name="Bloch C.A."/>
            <person name="Perna N.T."/>
            <person name="Burland V."/>
            <person name="Riley M."/>
            <person name="Collado-Vides J."/>
            <person name="Glasner J.D."/>
            <person name="Rode C.K."/>
            <person name="Mayhew G.F."/>
            <person name="Gregor J."/>
            <person name="Davis N.W."/>
            <person name="Kirkpatrick H.A."/>
            <person name="Goeden M.A."/>
            <person name="Rose D.J."/>
            <person name="Mau B."/>
            <person name="Shao Y."/>
        </authorList>
    </citation>
    <scope>NUCLEOTIDE SEQUENCE [LARGE SCALE GENOMIC DNA]</scope>
    <source>
        <strain>K12 / MG1655 / ATCC 47076</strain>
    </source>
</reference>
<reference key="6">
    <citation type="journal article" date="2006" name="Mol. Syst. Biol.">
        <title>Highly accurate genome sequences of Escherichia coli K-12 strains MG1655 and W3110.</title>
        <authorList>
            <person name="Hayashi K."/>
            <person name="Morooka N."/>
            <person name="Yamamoto Y."/>
            <person name="Fujita K."/>
            <person name="Isono K."/>
            <person name="Choi S."/>
            <person name="Ohtsubo E."/>
            <person name="Baba T."/>
            <person name="Wanner B.L."/>
            <person name="Mori H."/>
            <person name="Horiuchi T."/>
        </authorList>
    </citation>
    <scope>NUCLEOTIDE SEQUENCE [LARGE SCALE GENOMIC DNA]</scope>
    <source>
        <strain>K12 / W3110 / ATCC 27325 / DSM 5911</strain>
    </source>
</reference>
<feature type="chain" id="PRO_0000316158" description="Insertion element IS1 2 protein InsA">
    <location>
        <begin position="1"/>
        <end position="91"/>
    </location>
</feature>
<gene>
    <name type="primary">insA2</name>
    <name type="ordered locus">b0265</name>
    <name type="ordered locus">JW0257</name>
</gene>
<sequence length="91" mass="9902">MASVSISCPSCSATDGVVRNGKSTAGHQRYLCSHCRKTWQLQFTYTASQPGTHQKIIDMAMNGVGCRATARIMGVGLNTIFRHLKNSGRSR</sequence>
<proteinExistence type="inferred from homology"/>